<dbReference type="EC" id="5.3.1.1" evidence="1"/>
<dbReference type="EMBL" id="CP001138">
    <property type="protein sequence ID" value="ACH52418.1"/>
    <property type="molecule type" value="Genomic_DNA"/>
</dbReference>
<dbReference type="RefSeq" id="WP_001216339.1">
    <property type="nucleotide sequence ID" value="NC_011149.1"/>
</dbReference>
<dbReference type="SMR" id="B5F0R2"/>
<dbReference type="KEGG" id="sea:SeAg_B4327"/>
<dbReference type="HOGENOM" id="CLU_024251_2_1_6"/>
<dbReference type="UniPathway" id="UPA00109">
    <property type="reaction ID" value="UER00189"/>
</dbReference>
<dbReference type="UniPathway" id="UPA00138"/>
<dbReference type="Proteomes" id="UP000008819">
    <property type="component" value="Chromosome"/>
</dbReference>
<dbReference type="GO" id="GO:0005829">
    <property type="term" value="C:cytosol"/>
    <property type="evidence" value="ECO:0007669"/>
    <property type="project" value="TreeGrafter"/>
</dbReference>
<dbReference type="GO" id="GO:0004807">
    <property type="term" value="F:triose-phosphate isomerase activity"/>
    <property type="evidence" value="ECO:0007669"/>
    <property type="project" value="UniProtKB-UniRule"/>
</dbReference>
<dbReference type="GO" id="GO:0006094">
    <property type="term" value="P:gluconeogenesis"/>
    <property type="evidence" value="ECO:0007669"/>
    <property type="project" value="UniProtKB-UniRule"/>
</dbReference>
<dbReference type="GO" id="GO:0046166">
    <property type="term" value="P:glyceraldehyde-3-phosphate biosynthetic process"/>
    <property type="evidence" value="ECO:0007669"/>
    <property type="project" value="TreeGrafter"/>
</dbReference>
<dbReference type="GO" id="GO:0019563">
    <property type="term" value="P:glycerol catabolic process"/>
    <property type="evidence" value="ECO:0007669"/>
    <property type="project" value="TreeGrafter"/>
</dbReference>
<dbReference type="GO" id="GO:0006096">
    <property type="term" value="P:glycolytic process"/>
    <property type="evidence" value="ECO:0007669"/>
    <property type="project" value="UniProtKB-UniRule"/>
</dbReference>
<dbReference type="CDD" id="cd00311">
    <property type="entry name" value="TIM"/>
    <property type="match status" value="1"/>
</dbReference>
<dbReference type="FunFam" id="3.20.20.70:FF:000020">
    <property type="entry name" value="Triosephosphate isomerase"/>
    <property type="match status" value="1"/>
</dbReference>
<dbReference type="Gene3D" id="3.20.20.70">
    <property type="entry name" value="Aldolase class I"/>
    <property type="match status" value="1"/>
</dbReference>
<dbReference type="HAMAP" id="MF_00147_B">
    <property type="entry name" value="TIM_B"/>
    <property type="match status" value="1"/>
</dbReference>
<dbReference type="InterPro" id="IPR013785">
    <property type="entry name" value="Aldolase_TIM"/>
</dbReference>
<dbReference type="InterPro" id="IPR035990">
    <property type="entry name" value="TIM_sf"/>
</dbReference>
<dbReference type="InterPro" id="IPR022896">
    <property type="entry name" value="TrioseP_Isoase_bac/euk"/>
</dbReference>
<dbReference type="InterPro" id="IPR000652">
    <property type="entry name" value="Triosephosphate_isomerase"/>
</dbReference>
<dbReference type="InterPro" id="IPR020861">
    <property type="entry name" value="Triosephosphate_isomerase_AS"/>
</dbReference>
<dbReference type="NCBIfam" id="TIGR00419">
    <property type="entry name" value="tim"/>
    <property type="match status" value="1"/>
</dbReference>
<dbReference type="PANTHER" id="PTHR21139">
    <property type="entry name" value="TRIOSEPHOSPHATE ISOMERASE"/>
    <property type="match status" value="1"/>
</dbReference>
<dbReference type="PANTHER" id="PTHR21139:SF42">
    <property type="entry name" value="TRIOSEPHOSPHATE ISOMERASE"/>
    <property type="match status" value="1"/>
</dbReference>
<dbReference type="Pfam" id="PF00121">
    <property type="entry name" value="TIM"/>
    <property type="match status" value="1"/>
</dbReference>
<dbReference type="SUPFAM" id="SSF51351">
    <property type="entry name" value="Triosephosphate isomerase (TIM)"/>
    <property type="match status" value="1"/>
</dbReference>
<dbReference type="PROSITE" id="PS00171">
    <property type="entry name" value="TIM_1"/>
    <property type="match status" value="1"/>
</dbReference>
<dbReference type="PROSITE" id="PS51440">
    <property type="entry name" value="TIM_2"/>
    <property type="match status" value="1"/>
</dbReference>
<reference key="1">
    <citation type="journal article" date="2011" name="J. Bacteriol.">
        <title>Comparative genomics of 28 Salmonella enterica isolates: evidence for CRISPR-mediated adaptive sublineage evolution.</title>
        <authorList>
            <person name="Fricke W.F."/>
            <person name="Mammel M.K."/>
            <person name="McDermott P.F."/>
            <person name="Tartera C."/>
            <person name="White D.G."/>
            <person name="Leclerc J.E."/>
            <person name="Ravel J."/>
            <person name="Cebula T.A."/>
        </authorList>
    </citation>
    <scope>NUCLEOTIDE SEQUENCE [LARGE SCALE GENOMIC DNA]</scope>
    <source>
        <strain>SL483</strain>
    </source>
</reference>
<sequence length="255" mass="26917">MRHPLVMGNWKLNGSRHMVNELVANLRKELTGVAGCDVAIAPPEMYIDLAKRAAAGSHIMLGAQNVDLNLSGAFTGETSAEMLKDIGAQYIIIGHSERRTYHKESDELIAKKFAVLKEQGLTPVLCIGETEAENEAGKTEEVCARQIDAVLKTQGAAAFEGAVIAYEPVWAIGTGKSATPAQAQAVHKFIRDHIAKADAKIAEQVIIQYGGSVNASNAAELFAQPDIDGALVGGASLKADAFAVIVKAAEAAKQA</sequence>
<protein>
    <recommendedName>
        <fullName evidence="1">Triosephosphate isomerase</fullName>
        <shortName evidence="1">TIM</shortName>
        <shortName evidence="1">TPI</shortName>
        <ecNumber evidence="1">5.3.1.1</ecNumber>
    </recommendedName>
    <alternativeName>
        <fullName evidence="1">Triose-phosphate isomerase</fullName>
    </alternativeName>
</protein>
<organism>
    <name type="scientific">Salmonella agona (strain SL483)</name>
    <dbReference type="NCBI Taxonomy" id="454166"/>
    <lineage>
        <taxon>Bacteria</taxon>
        <taxon>Pseudomonadati</taxon>
        <taxon>Pseudomonadota</taxon>
        <taxon>Gammaproteobacteria</taxon>
        <taxon>Enterobacterales</taxon>
        <taxon>Enterobacteriaceae</taxon>
        <taxon>Salmonella</taxon>
    </lineage>
</organism>
<evidence type="ECO:0000255" key="1">
    <source>
        <dbReference type="HAMAP-Rule" id="MF_00147"/>
    </source>
</evidence>
<accession>B5F0R2</accession>
<comment type="function">
    <text evidence="1">Involved in the gluconeogenesis. Catalyzes stereospecifically the conversion of dihydroxyacetone phosphate (DHAP) to D-glyceraldehyde-3-phosphate (G3P).</text>
</comment>
<comment type="catalytic activity">
    <reaction evidence="1">
        <text>D-glyceraldehyde 3-phosphate = dihydroxyacetone phosphate</text>
        <dbReference type="Rhea" id="RHEA:18585"/>
        <dbReference type="ChEBI" id="CHEBI:57642"/>
        <dbReference type="ChEBI" id="CHEBI:59776"/>
        <dbReference type="EC" id="5.3.1.1"/>
    </reaction>
</comment>
<comment type="pathway">
    <text evidence="1">Carbohydrate biosynthesis; gluconeogenesis.</text>
</comment>
<comment type="pathway">
    <text evidence="1">Carbohydrate degradation; glycolysis; D-glyceraldehyde 3-phosphate from glycerone phosphate: step 1/1.</text>
</comment>
<comment type="subunit">
    <text evidence="1">Homodimer.</text>
</comment>
<comment type="subcellular location">
    <subcellularLocation>
        <location evidence="1">Cytoplasm</location>
    </subcellularLocation>
</comment>
<comment type="similarity">
    <text evidence="1">Belongs to the triosephosphate isomerase family.</text>
</comment>
<name>TPIS_SALA4</name>
<feature type="chain" id="PRO_1000096525" description="Triosephosphate isomerase">
    <location>
        <begin position="1"/>
        <end position="255"/>
    </location>
</feature>
<feature type="active site" description="Electrophile" evidence="1">
    <location>
        <position position="95"/>
    </location>
</feature>
<feature type="active site" description="Proton acceptor" evidence="1">
    <location>
        <position position="167"/>
    </location>
</feature>
<feature type="binding site" evidence="1">
    <location>
        <begin position="9"/>
        <end position="11"/>
    </location>
    <ligand>
        <name>substrate</name>
    </ligand>
</feature>
<feature type="binding site" evidence="1">
    <location>
        <position position="173"/>
    </location>
    <ligand>
        <name>substrate</name>
    </ligand>
</feature>
<feature type="binding site" evidence="1">
    <location>
        <position position="212"/>
    </location>
    <ligand>
        <name>substrate</name>
    </ligand>
</feature>
<feature type="binding site" evidence="1">
    <location>
        <begin position="233"/>
        <end position="234"/>
    </location>
    <ligand>
        <name>substrate</name>
    </ligand>
</feature>
<proteinExistence type="inferred from homology"/>
<keyword id="KW-0963">Cytoplasm</keyword>
<keyword id="KW-0312">Gluconeogenesis</keyword>
<keyword id="KW-0324">Glycolysis</keyword>
<keyword id="KW-0413">Isomerase</keyword>
<gene>
    <name evidence="1" type="primary">tpiA</name>
    <name type="ordered locus">SeAg_B4327</name>
</gene>